<dbReference type="EC" id="2.5.1.9"/>
<dbReference type="EMBL" id="AE002160">
    <property type="protein sequence ID" value="AAF39502.1"/>
    <property type="molecule type" value="Genomic_DNA"/>
</dbReference>
<dbReference type="PIR" id="G81675">
    <property type="entry name" value="G81675"/>
</dbReference>
<dbReference type="RefSeq" id="WP_010231218.1">
    <property type="nucleotide sequence ID" value="NZ_CP063055.1"/>
</dbReference>
<dbReference type="SMR" id="Q9PJZ1"/>
<dbReference type="GeneID" id="1246046"/>
<dbReference type="KEGG" id="cmu:TC_0685"/>
<dbReference type="eggNOG" id="COG0307">
    <property type="taxonomic scope" value="Bacteria"/>
</dbReference>
<dbReference type="HOGENOM" id="CLU_034388_0_1_0"/>
<dbReference type="OrthoDB" id="9788537at2"/>
<dbReference type="UniPathway" id="UPA00275">
    <property type="reaction ID" value="UER00405"/>
</dbReference>
<dbReference type="Proteomes" id="UP000000800">
    <property type="component" value="Chromosome"/>
</dbReference>
<dbReference type="GO" id="GO:0004746">
    <property type="term" value="F:riboflavin synthase activity"/>
    <property type="evidence" value="ECO:0007669"/>
    <property type="project" value="UniProtKB-EC"/>
</dbReference>
<dbReference type="GO" id="GO:0009231">
    <property type="term" value="P:riboflavin biosynthetic process"/>
    <property type="evidence" value="ECO:0007669"/>
    <property type="project" value="UniProtKB-UniPathway"/>
</dbReference>
<dbReference type="CDD" id="cd00402">
    <property type="entry name" value="Riboflavin_synthase_like"/>
    <property type="match status" value="1"/>
</dbReference>
<dbReference type="Gene3D" id="2.40.30.20">
    <property type="match status" value="2"/>
</dbReference>
<dbReference type="InterPro" id="IPR023366">
    <property type="entry name" value="ATP_synth_asu-like_sf"/>
</dbReference>
<dbReference type="InterPro" id="IPR001783">
    <property type="entry name" value="Lumazine-bd"/>
</dbReference>
<dbReference type="InterPro" id="IPR026017">
    <property type="entry name" value="Lumazine-bd_dom"/>
</dbReference>
<dbReference type="InterPro" id="IPR017938">
    <property type="entry name" value="Riboflavin_synthase-like_b-brl"/>
</dbReference>
<dbReference type="NCBIfam" id="NF006767">
    <property type="entry name" value="PRK09289.1"/>
    <property type="match status" value="1"/>
</dbReference>
<dbReference type="NCBIfam" id="NF009566">
    <property type="entry name" value="PRK13020.1"/>
    <property type="match status" value="1"/>
</dbReference>
<dbReference type="NCBIfam" id="TIGR00187">
    <property type="entry name" value="ribE"/>
    <property type="match status" value="1"/>
</dbReference>
<dbReference type="PANTHER" id="PTHR21098:SF0">
    <property type="entry name" value="RIBOFLAVIN SYNTHASE"/>
    <property type="match status" value="1"/>
</dbReference>
<dbReference type="PANTHER" id="PTHR21098">
    <property type="entry name" value="RIBOFLAVIN SYNTHASE ALPHA CHAIN"/>
    <property type="match status" value="1"/>
</dbReference>
<dbReference type="Pfam" id="PF00677">
    <property type="entry name" value="Lum_binding"/>
    <property type="match status" value="2"/>
</dbReference>
<dbReference type="PIRSF" id="PIRSF000498">
    <property type="entry name" value="Riboflavin_syn_A"/>
    <property type="match status" value="1"/>
</dbReference>
<dbReference type="SUPFAM" id="SSF63380">
    <property type="entry name" value="Riboflavin synthase domain-like"/>
    <property type="match status" value="2"/>
</dbReference>
<dbReference type="PROSITE" id="PS51177">
    <property type="entry name" value="LUMAZINE_BIND"/>
    <property type="match status" value="2"/>
</dbReference>
<sequence>MFSGIIQEVARVDLIHHYGDSMEIGIFARNLVDGVPGSSIAVDGICLTLVKREFELLFFDVTEETMACTTIKNYTVGSMVNLERSVRLGDEIGGHFVSGHVCGVGTIIAVEKSYMFFKAPTNLVPYVLEKGFIAIDGISLTIAQVRGDIFSVSVIPETRARTSLGYKQVGSHVNMEPDMMTKMQVDTVMRFQAEKIGK</sequence>
<comment type="function">
    <text evidence="1">Catalyzes the dismutation of two molecules of 6,7-dimethyl-8-ribityllumazine, resulting in the formation of riboflavin and 5-amino-6-(D-ribitylamino)uracil.</text>
</comment>
<comment type="catalytic activity">
    <reaction>
        <text>2 6,7-dimethyl-8-(1-D-ribityl)lumazine + H(+) = 5-amino-6-(D-ribitylamino)uracil + riboflavin</text>
        <dbReference type="Rhea" id="RHEA:20772"/>
        <dbReference type="ChEBI" id="CHEBI:15378"/>
        <dbReference type="ChEBI" id="CHEBI:15934"/>
        <dbReference type="ChEBI" id="CHEBI:57986"/>
        <dbReference type="ChEBI" id="CHEBI:58201"/>
        <dbReference type="EC" id="2.5.1.9"/>
    </reaction>
</comment>
<comment type="pathway">
    <text>Cofactor biosynthesis; riboflavin biosynthesis; riboflavin from 2-hydroxy-3-oxobutyl phosphate and 5-amino-6-(D-ribitylamino)uracil: step 2/2.</text>
</comment>
<comment type="subunit">
    <text evidence="1">Homotrimer.</text>
</comment>
<reference key="1">
    <citation type="journal article" date="2000" name="Nucleic Acids Res.">
        <title>Genome sequences of Chlamydia trachomatis MoPn and Chlamydia pneumoniae AR39.</title>
        <authorList>
            <person name="Read T.D."/>
            <person name="Brunham R.C."/>
            <person name="Shen C."/>
            <person name="Gill S.R."/>
            <person name="Heidelberg J.F."/>
            <person name="White O."/>
            <person name="Hickey E.K."/>
            <person name="Peterson J.D."/>
            <person name="Utterback T.R."/>
            <person name="Berry K.J."/>
            <person name="Bass S."/>
            <person name="Linher K.D."/>
            <person name="Weidman J.F."/>
            <person name="Khouri H.M."/>
            <person name="Craven B."/>
            <person name="Bowman C."/>
            <person name="Dodson R.J."/>
            <person name="Gwinn M.L."/>
            <person name="Nelson W.C."/>
            <person name="DeBoy R.T."/>
            <person name="Kolonay J.F."/>
            <person name="McClarty G."/>
            <person name="Salzberg S.L."/>
            <person name="Eisen J.A."/>
            <person name="Fraser C.M."/>
        </authorList>
    </citation>
    <scope>NUCLEOTIDE SEQUENCE [LARGE SCALE GENOMIC DNA]</scope>
    <source>
        <strain>MoPn / Nigg</strain>
    </source>
</reference>
<organism>
    <name type="scientific">Chlamydia muridarum (strain MoPn / Nigg)</name>
    <dbReference type="NCBI Taxonomy" id="243161"/>
    <lineage>
        <taxon>Bacteria</taxon>
        <taxon>Pseudomonadati</taxon>
        <taxon>Chlamydiota</taxon>
        <taxon>Chlamydiia</taxon>
        <taxon>Chlamydiales</taxon>
        <taxon>Chlamydiaceae</taxon>
        <taxon>Chlamydia/Chlamydophila group</taxon>
        <taxon>Chlamydia</taxon>
    </lineage>
</organism>
<protein>
    <recommendedName>
        <fullName>Riboflavin synthase</fullName>
        <shortName>RS</shortName>
        <ecNumber>2.5.1.9</ecNumber>
    </recommendedName>
</protein>
<keyword id="KW-0677">Repeat</keyword>
<keyword id="KW-0686">Riboflavin biosynthesis</keyword>
<keyword id="KW-0808">Transferase</keyword>
<name>RISA_CHLMU</name>
<accession>Q9PJZ1</accession>
<proteinExistence type="inferred from homology"/>
<evidence type="ECO:0000250" key="1"/>
<evidence type="ECO:0000250" key="2">
    <source>
        <dbReference type="UniProtKB" id="P0AFU8"/>
    </source>
</evidence>
<evidence type="ECO:0000250" key="3">
    <source>
        <dbReference type="UniProtKB" id="Q2YN92"/>
    </source>
</evidence>
<gene>
    <name type="primary">ribE</name>
    <name type="synonym">ribC</name>
    <name type="ordered locus">TC_0685</name>
</gene>
<feature type="chain" id="PRO_0000068163" description="Riboflavin synthase">
    <location>
        <begin position="1"/>
        <end position="198"/>
    </location>
</feature>
<feature type="repeat" description="Lumazine-binding 1">
    <location>
        <begin position="1"/>
        <end position="95"/>
    </location>
</feature>
<feature type="repeat" description="Lumazine-binding 2">
    <location>
        <begin position="96"/>
        <end position="188"/>
    </location>
</feature>
<feature type="binding site" evidence="3">
    <location>
        <begin position="4"/>
        <end position="6"/>
    </location>
    <ligand>
        <name>2,4-dihydroxypteridine</name>
        <dbReference type="ChEBI" id="CHEBI:16489"/>
        <label>1</label>
    </ligand>
</feature>
<feature type="binding site" evidence="3">
    <location>
        <begin position="46"/>
        <end position="48"/>
    </location>
    <ligand>
        <name>2,4-dihydroxypteridine</name>
        <dbReference type="ChEBI" id="CHEBI:16489"/>
        <label>2</label>
        <note>ligand shared between two trimeric partners</note>
    </ligand>
</feature>
<feature type="binding site" evidence="2">
    <location>
        <begin position="60"/>
        <end position="65"/>
    </location>
    <ligand>
        <name>2,4-dihydroxypteridine</name>
        <dbReference type="ChEBI" id="CHEBI:16489"/>
        <label>2</label>
        <note>ligand shared between two trimeric partners</note>
    </ligand>
</feature>
<feature type="binding site" evidence="3">
    <location>
        <begin position="99"/>
        <end position="101"/>
    </location>
    <ligand>
        <name>2,4-dihydroxypteridine</name>
        <dbReference type="ChEBI" id="CHEBI:16489"/>
        <label>2</label>
        <note>ligand shared between two trimeric partners</note>
    </ligand>
</feature>
<feature type="binding site" description="in other chain" evidence="3">
    <location>
        <position position="130"/>
    </location>
    <ligand>
        <name>2,4-dihydroxypteridine</name>
        <dbReference type="ChEBI" id="CHEBI:16489"/>
        <label>2</label>
        <note>ligand shared between two trimeric partners</note>
    </ligand>
</feature>
<feature type="binding site" evidence="3">
    <location>
        <begin position="139"/>
        <end position="141"/>
    </location>
    <ligand>
        <name>2,4-dihydroxypteridine</name>
        <dbReference type="ChEBI" id="CHEBI:16489"/>
        <label>1</label>
    </ligand>
</feature>
<feature type="binding site" evidence="3">
    <location>
        <begin position="153"/>
        <end position="158"/>
    </location>
    <ligand>
        <name>2,4-dihydroxypteridine</name>
        <dbReference type="ChEBI" id="CHEBI:16489"/>
        <label>1</label>
    </ligand>
</feature>